<gene>
    <name evidence="1" type="primary">trmD</name>
    <name type="ordered locus">NT01CX_2209</name>
</gene>
<proteinExistence type="inferred from homology"/>
<comment type="function">
    <text evidence="1">Specifically methylates guanosine-37 in various tRNAs.</text>
</comment>
<comment type="catalytic activity">
    <reaction evidence="1">
        <text>guanosine(37) in tRNA + S-adenosyl-L-methionine = N(1)-methylguanosine(37) in tRNA + S-adenosyl-L-homocysteine + H(+)</text>
        <dbReference type="Rhea" id="RHEA:36899"/>
        <dbReference type="Rhea" id="RHEA-COMP:10145"/>
        <dbReference type="Rhea" id="RHEA-COMP:10147"/>
        <dbReference type="ChEBI" id="CHEBI:15378"/>
        <dbReference type="ChEBI" id="CHEBI:57856"/>
        <dbReference type="ChEBI" id="CHEBI:59789"/>
        <dbReference type="ChEBI" id="CHEBI:73542"/>
        <dbReference type="ChEBI" id="CHEBI:74269"/>
        <dbReference type="EC" id="2.1.1.228"/>
    </reaction>
</comment>
<comment type="subunit">
    <text evidence="1">Homodimer.</text>
</comment>
<comment type="subcellular location">
    <subcellularLocation>
        <location evidence="1">Cytoplasm</location>
    </subcellularLocation>
</comment>
<comment type="similarity">
    <text evidence="1">Belongs to the RNA methyltransferase TrmD family.</text>
</comment>
<reference key="1">
    <citation type="journal article" date="2006" name="Nat. Biotechnol.">
        <title>The genome and transcriptomes of the anti-tumor agent Clostridium novyi-NT.</title>
        <authorList>
            <person name="Bettegowda C."/>
            <person name="Huang X."/>
            <person name="Lin J."/>
            <person name="Cheong I."/>
            <person name="Kohli M."/>
            <person name="Szabo S.A."/>
            <person name="Zhang X."/>
            <person name="Diaz L.A. Jr."/>
            <person name="Velculescu V.E."/>
            <person name="Parmigiani G."/>
            <person name="Kinzler K.W."/>
            <person name="Vogelstein B."/>
            <person name="Zhou S."/>
        </authorList>
    </citation>
    <scope>NUCLEOTIDE SEQUENCE [LARGE SCALE GENOMIC DNA]</scope>
    <source>
        <strain>NT</strain>
    </source>
</reference>
<sequence>MAMKIDILTLFPEMFDIFNHSIIGRAIDKGILKIQSHNIRDYSMNKHKKVDDYPYGGGAGMVMTPQPIVDSIKDLKINNKGKVIFLGPRGKTFNQEIAKTLSKEKELIFICGHYEGIDERVYKYIDEEISLGDFVLTGGEMACIPVVDSICRLVPGVLSSSESYMEESFYNGLLEYPQYTRPECFEGENVPKVLLSGHHDNIRKWRRYKSLTITKTRRPDLFKQITLSKEDKKLLEIYSKE</sequence>
<organism>
    <name type="scientific">Clostridium novyi (strain NT)</name>
    <dbReference type="NCBI Taxonomy" id="386415"/>
    <lineage>
        <taxon>Bacteria</taxon>
        <taxon>Bacillati</taxon>
        <taxon>Bacillota</taxon>
        <taxon>Clostridia</taxon>
        <taxon>Eubacteriales</taxon>
        <taxon>Clostridiaceae</taxon>
        <taxon>Clostridium</taxon>
    </lineage>
</organism>
<accession>A0Q0Y0</accession>
<dbReference type="EC" id="2.1.1.228" evidence="1"/>
<dbReference type="EMBL" id="CP000382">
    <property type="protein sequence ID" value="ABK60916.1"/>
    <property type="molecule type" value="Genomic_DNA"/>
</dbReference>
<dbReference type="SMR" id="A0Q0Y0"/>
<dbReference type="STRING" id="386415.NT01CX_2209"/>
<dbReference type="KEGG" id="cno:NT01CX_2209"/>
<dbReference type="eggNOG" id="COG0336">
    <property type="taxonomic scope" value="Bacteria"/>
</dbReference>
<dbReference type="HOGENOM" id="CLU_047363_0_1_9"/>
<dbReference type="Proteomes" id="UP000008220">
    <property type="component" value="Chromosome"/>
</dbReference>
<dbReference type="GO" id="GO:0005829">
    <property type="term" value="C:cytosol"/>
    <property type="evidence" value="ECO:0007669"/>
    <property type="project" value="TreeGrafter"/>
</dbReference>
<dbReference type="GO" id="GO:0052906">
    <property type="term" value="F:tRNA (guanine(37)-N1)-methyltransferase activity"/>
    <property type="evidence" value="ECO:0007669"/>
    <property type="project" value="UniProtKB-UniRule"/>
</dbReference>
<dbReference type="GO" id="GO:0002939">
    <property type="term" value="P:tRNA N1-guanine methylation"/>
    <property type="evidence" value="ECO:0007669"/>
    <property type="project" value="TreeGrafter"/>
</dbReference>
<dbReference type="CDD" id="cd18080">
    <property type="entry name" value="TrmD-like"/>
    <property type="match status" value="1"/>
</dbReference>
<dbReference type="FunFam" id="1.10.1270.20:FF:000001">
    <property type="entry name" value="tRNA (guanine-N(1)-)-methyltransferase"/>
    <property type="match status" value="1"/>
</dbReference>
<dbReference type="FunFam" id="3.40.1280.10:FF:000001">
    <property type="entry name" value="tRNA (guanine-N(1)-)-methyltransferase"/>
    <property type="match status" value="1"/>
</dbReference>
<dbReference type="Gene3D" id="3.40.1280.10">
    <property type="match status" value="1"/>
</dbReference>
<dbReference type="Gene3D" id="1.10.1270.20">
    <property type="entry name" value="tRNA(m1g37)methyltransferase, domain 2"/>
    <property type="match status" value="1"/>
</dbReference>
<dbReference type="HAMAP" id="MF_00605">
    <property type="entry name" value="TrmD"/>
    <property type="match status" value="1"/>
</dbReference>
<dbReference type="InterPro" id="IPR029028">
    <property type="entry name" value="Alpha/beta_knot_MTases"/>
</dbReference>
<dbReference type="InterPro" id="IPR023148">
    <property type="entry name" value="tRNA_m1G_MeTrfase_C_sf"/>
</dbReference>
<dbReference type="InterPro" id="IPR002649">
    <property type="entry name" value="tRNA_m1G_MeTrfase_TrmD"/>
</dbReference>
<dbReference type="InterPro" id="IPR029026">
    <property type="entry name" value="tRNA_m1G_MTases_N"/>
</dbReference>
<dbReference type="InterPro" id="IPR016009">
    <property type="entry name" value="tRNA_MeTrfase_TRMD/TRM10"/>
</dbReference>
<dbReference type="NCBIfam" id="NF000648">
    <property type="entry name" value="PRK00026.1"/>
    <property type="match status" value="1"/>
</dbReference>
<dbReference type="NCBIfam" id="TIGR00088">
    <property type="entry name" value="trmD"/>
    <property type="match status" value="1"/>
</dbReference>
<dbReference type="PANTHER" id="PTHR46417">
    <property type="entry name" value="TRNA (GUANINE-N(1)-)-METHYLTRANSFERASE"/>
    <property type="match status" value="1"/>
</dbReference>
<dbReference type="PANTHER" id="PTHR46417:SF1">
    <property type="entry name" value="TRNA (GUANINE-N(1)-)-METHYLTRANSFERASE"/>
    <property type="match status" value="1"/>
</dbReference>
<dbReference type="Pfam" id="PF01746">
    <property type="entry name" value="tRNA_m1G_MT"/>
    <property type="match status" value="1"/>
</dbReference>
<dbReference type="PIRSF" id="PIRSF000386">
    <property type="entry name" value="tRNA_mtase"/>
    <property type="match status" value="1"/>
</dbReference>
<dbReference type="SUPFAM" id="SSF75217">
    <property type="entry name" value="alpha/beta knot"/>
    <property type="match status" value="1"/>
</dbReference>
<keyword id="KW-0963">Cytoplasm</keyword>
<keyword id="KW-0489">Methyltransferase</keyword>
<keyword id="KW-1185">Reference proteome</keyword>
<keyword id="KW-0949">S-adenosyl-L-methionine</keyword>
<keyword id="KW-0808">Transferase</keyword>
<keyword id="KW-0819">tRNA processing</keyword>
<feature type="chain" id="PRO_1000006473" description="tRNA (guanine-N(1)-)-methyltransferase">
    <location>
        <begin position="1"/>
        <end position="241"/>
    </location>
</feature>
<feature type="binding site" evidence="1">
    <location>
        <position position="112"/>
    </location>
    <ligand>
        <name>S-adenosyl-L-methionine</name>
        <dbReference type="ChEBI" id="CHEBI:59789"/>
    </ligand>
</feature>
<feature type="binding site" evidence="1">
    <location>
        <begin position="131"/>
        <end position="136"/>
    </location>
    <ligand>
        <name>S-adenosyl-L-methionine</name>
        <dbReference type="ChEBI" id="CHEBI:59789"/>
    </ligand>
</feature>
<protein>
    <recommendedName>
        <fullName evidence="1">tRNA (guanine-N(1)-)-methyltransferase</fullName>
        <ecNumber evidence="1">2.1.1.228</ecNumber>
    </recommendedName>
    <alternativeName>
        <fullName evidence="1">M1G-methyltransferase</fullName>
    </alternativeName>
    <alternativeName>
        <fullName evidence="1">tRNA [GM37] methyltransferase</fullName>
    </alternativeName>
</protein>
<evidence type="ECO:0000255" key="1">
    <source>
        <dbReference type="HAMAP-Rule" id="MF_00605"/>
    </source>
</evidence>
<name>TRMD_CLONN</name>